<evidence type="ECO:0000255" key="1">
    <source>
        <dbReference type="HAMAP-Rule" id="MF_00523"/>
    </source>
</evidence>
<reference key="1">
    <citation type="journal article" date="2006" name="Nat. Biotechnol.">
        <title>Complete genome sequence of the entomopathogenic and metabolically versatile soil bacterium Pseudomonas entomophila.</title>
        <authorList>
            <person name="Vodovar N."/>
            <person name="Vallenet D."/>
            <person name="Cruveiller S."/>
            <person name="Rouy Z."/>
            <person name="Barbe V."/>
            <person name="Acosta C."/>
            <person name="Cattolico L."/>
            <person name="Jubin C."/>
            <person name="Lajus A."/>
            <person name="Segurens B."/>
            <person name="Vacherie B."/>
            <person name="Wincker P."/>
            <person name="Weissenbach J."/>
            <person name="Lemaitre B."/>
            <person name="Medigue C."/>
            <person name="Boccard F."/>
        </authorList>
    </citation>
    <scope>NUCLEOTIDE SEQUENCE [LARGE SCALE GENOMIC DNA]</scope>
    <source>
        <strain>L48</strain>
    </source>
</reference>
<comment type="function">
    <text evidence="1">Catalyzes the N-acylation of UDP-3-O-acylglucosamine using 3-hydroxyacyl-ACP as the acyl donor. Is involved in the biosynthesis of lipid A, a phosphorylated glycolipid that anchors the lipopolysaccharide to the outer membrane of the cell.</text>
</comment>
<comment type="catalytic activity">
    <reaction evidence="1">
        <text>a UDP-3-O-[(3R)-3-hydroxyacyl]-alpha-D-glucosamine + a (3R)-hydroxyacyl-[ACP] = a UDP-2-N,3-O-bis[(3R)-3-hydroxyacyl]-alpha-D-glucosamine + holo-[ACP] + H(+)</text>
        <dbReference type="Rhea" id="RHEA:53836"/>
        <dbReference type="Rhea" id="RHEA-COMP:9685"/>
        <dbReference type="Rhea" id="RHEA-COMP:9945"/>
        <dbReference type="ChEBI" id="CHEBI:15378"/>
        <dbReference type="ChEBI" id="CHEBI:64479"/>
        <dbReference type="ChEBI" id="CHEBI:78827"/>
        <dbReference type="ChEBI" id="CHEBI:137740"/>
        <dbReference type="ChEBI" id="CHEBI:137748"/>
        <dbReference type="EC" id="2.3.1.191"/>
    </reaction>
</comment>
<comment type="pathway">
    <text evidence="1">Bacterial outer membrane biogenesis; LPS lipid A biosynthesis.</text>
</comment>
<comment type="subunit">
    <text evidence="1">Homotrimer.</text>
</comment>
<comment type="similarity">
    <text evidence="1">Belongs to the transferase hexapeptide repeat family. LpxD subfamily.</text>
</comment>
<proteinExistence type="inferred from homology"/>
<keyword id="KW-0012">Acyltransferase</keyword>
<keyword id="KW-0441">Lipid A biosynthesis</keyword>
<keyword id="KW-0444">Lipid biosynthesis</keyword>
<keyword id="KW-0443">Lipid metabolism</keyword>
<keyword id="KW-0677">Repeat</keyword>
<keyword id="KW-0808">Transferase</keyword>
<sequence length="351" mass="36498">MTVTMTLGQLAEALGATLKGPEALQITGLATLQEAGSGQLSFLANKQYRKFLESSQASAVLLKAEDAEGFAGNALIVADPYLAYARISHLFDPKPKAVAGIHPSAVVAEDAQVDTSASIGPFAVIESGARIGADVTIGAHCFIGARCVVGEGGWLAPRVTLYHDVIIGKRVVIQSGAVIGGEGFGFANEKGIWRKIAQIGGVTLGDDVEIGVNTAVDRGALSDTRIGDGVKLDNQIQIAHNVQVGDHTAMAACVGISGSTRIGKHCMIAGGVGMVGHIDVCDNVFVSGMTMVTRSITEPGGYSSGTAMQPLAEWRKSAARIRQLDEMSKRLQQLEKRVDTVTSGGQPTSEG</sequence>
<gene>
    <name evidence="1" type="primary">lpxD</name>
    <name type="ordered locus">PSEEN4210</name>
</gene>
<organism>
    <name type="scientific">Pseudomonas entomophila (strain L48)</name>
    <dbReference type="NCBI Taxonomy" id="384676"/>
    <lineage>
        <taxon>Bacteria</taxon>
        <taxon>Pseudomonadati</taxon>
        <taxon>Pseudomonadota</taxon>
        <taxon>Gammaproteobacteria</taxon>
        <taxon>Pseudomonadales</taxon>
        <taxon>Pseudomonadaceae</taxon>
        <taxon>Pseudomonas</taxon>
    </lineage>
</organism>
<name>LPXD_PSEE4</name>
<protein>
    <recommendedName>
        <fullName evidence="1">UDP-3-O-acylglucosamine N-acyltransferase</fullName>
        <ecNumber evidence="1">2.3.1.191</ecNumber>
    </recommendedName>
</protein>
<dbReference type="EC" id="2.3.1.191" evidence="1"/>
<dbReference type="EMBL" id="CT573326">
    <property type="protein sequence ID" value="CAK16899.1"/>
    <property type="molecule type" value="Genomic_DNA"/>
</dbReference>
<dbReference type="RefSeq" id="WP_011535270.1">
    <property type="nucleotide sequence ID" value="NC_008027.1"/>
</dbReference>
<dbReference type="SMR" id="Q1I636"/>
<dbReference type="STRING" id="384676.PSEEN4210"/>
<dbReference type="GeneID" id="32807217"/>
<dbReference type="KEGG" id="pen:PSEEN4210"/>
<dbReference type="eggNOG" id="COG1044">
    <property type="taxonomic scope" value="Bacteria"/>
</dbReference>
<dbReference type="HOGENOM" id="CLU_049865_0_1_6"/>
<dbReference type="OrthoDB" id="9784739at2"/>
<dbReference type="UniPathway" id="UPA00973"/>
<dbReference type="Proteomes" id="UP000000658">
    <property type="component" value="Chromosome"/>
</dbReference>
<dbReference type="GO" id="GO:0016020">
    <property type="term" value="C:membrane"/>
    <property type="evidence" value="ECO:0007669"/>
    <property type="project" value="GOC"/>
</dbReference>
<dbReference type="GO" id="GO:0016410">
    <property type="term" value="F:N-acyltransferase activity"/>
    <property type="evidence" value="ECO:0007669"/>
    <property type="project" value="InterPro"/>
</dbReference>
<dbReference type="GO" id="GO:0009245">
    <property type="term" value="P:lipid A biosynthetic process"/>
    <property type="evidence" value="ECO:0007669"/>
    <property type="project" value="UniProtKB-UniRule"/>
</dbReference>
<dbReference type="CDD" id="cd03352">
    <property type="entry name" value="LbH_LpxD"/>
    <property type="match status" value="1"/>
</dbReference>
<dbReference type="Gene3D" id="1.20.5.170">
    <property type="match status" value="1"/>
</dbReference>
<dbReference type="Gene3D" id="2.160.10.10">
    <property type="entry name" value="Hexapeptide repeat proteins"/>
    <property type="match status" value="1"/>
</dbReference>
<dbReference type="Gene3D" id="3.40.1390.10">
    <property type="entry name" value="MurE/MurF, N-terminal domain"/>
    <property type="match status" value="1"/>
</dbReference>
<dbReference type="HAMAP" id="MF_00523">
    <property type="entry name" value="LpxD"/>
    <property type="match status" value="1"/>
</dbReference>
<dbReference type="InterPro" id="IPR001451">
    <property type="entry name" value="Hexapep"/>
</dbReference>
<dbReference type="InterPro" id="IPR018357">
    <property type="entry name" value="Hexapep_transf_CS"/>
</dbReference>
<dbReference type="InterPro" id="IPR007691">
    <property type="entry name" value="LpxD"/>
</dbReference>
<dbReference type="InterPro" id="IPR011004">
    <property type="entry name" value="Trimer_LpxA-like_sf"/>
</dbReference>
<dbReference type="InterPro" id="IPR020573">
    <property type="entry name" value="UDP_GlcNAc_AcTrfase_non-rep"/>
</dbReference>
<dbReference type="NCBIfam" id="TIGR01853">
    <property type="entry name" value="lipid_A_lpxD"/>
    <property type="match status" value="1"/>
</dbReference>
<dbReference type="NCBIfam" id="NF002060">
    <property type="entry name" value="PRK00892.1"/>
    <property type="match status" value="1"/>
</dbReference>
<dbReference type="PANTHER" id="PTHR43378">
    <property type="entry name" value="UDP-3-O-ACYLGLUCOSAMINE N-ACYLTRANSFERASE"/>
    <property type="match status" value="1"/>
</dbReference>
<dbReference type="PANTHER" id="PTHR43378:SF2">
    <property type="entry name" value="UDP-3-O-ACYLGLUCOSAMINE N-ACYLTRANSFERASE 1, MITOCHONDRIAL-RELATED"/>
    <property type="match status" value="1"/>
</dbReference>
<dbReference type="Pfam" id="PF00132">
    <property type="entry name" value="Hexapep"/>
    <property type="match status" value="2"/>
</dbReference>
<dbReference type="Pfam" id="PF04613">
    <property type="entry name" value="LpxD"/>
    <property type="match status" value="1"/>
</dbReference>
<dbReference type="SUPFAM" id="SSF51161">
    <property type="entry name" value="Trimeric LpxA-like enzymes"/>
    <property type="match status" value="1"/>
</dbReference>
<dbReference type="PROSITE" id="PS00101">
    <property type="entry name" value="HEXAPEP_TRANSFERASES"/>
    <property type="match status" value="1"/>
</dbReference>
<accession>Q1I636</accession>
<feature type="chain" id="PRO_1000050952" description="UDP-3-O-acylglucosamine N-acyltransferase">
    <location>
        <begin position="1"/>
        <end position="351"/>
    </location>
</feature>
<feature type="active site" description="Proton acceptor" evidence="1">
    <location>
        <position position="240"/>
    </location>
</feature>